<name>NUR1_VANPO</name>
<protein>
    <recommendedName>
        <fullName>Nuclear rim protein 1</fullName>
    </recommendedName>
</protein>
<reference key="1">
    <citation type="journal article" date="2007" name="Proc. Natl. Acad. Sci. U.S.A.">
        <title>Independent sorting-out of thousands of duplicated gene pairs in two yeast species descended from a whole-genome duplication.</title>
        <authorList>
            <person name="Scannell D.R."/>
            <person name="Frank A.C."/>
            <person name="Conant G.C."/>
            <person name="Byrne K.P."/>
            <person name="Woolfit M."/>
            <person name="Wolfe K.H."/>
        </authorList>
    </citation>
    <scope>NUCLEOTIDE SEQUENCE [LARGE SCALE GENOMIC DNA]</scope>
    <source>
        <strain>ATCC 22028 / DSM 70294 / BCRC 21397 / CBS 2163 / NBRC 10782 / NRRL Y-8283 / UCD 57-17</strain>
    </source>
</reference>
<sequence length="401" mass="47397">MNGLDDENQIDERDHYTDDGDYEIDIDSMNMFKSLYYEMMAYFSDLQMHLGEHLMAIDWDMKCKSIAEPVGNCLTALFYIIRLLQDTLLSNYKDVYVSTEAFDLSKSTTLQEFPFLIRFVEVSKTKNLQNAKYIKKKTFMFYFDKLLLFLMILILSTNAYISWTFIWRNFKTYSLLYVVDRPNSKNVTKCSRTDLDQSYMENVSYGSYWTMLSYYIRNFRKKDDLEDEITTVKQKTPNVNEKDYYYQLKKWSPSKFLTSLFCSFSPTCLVFLILSDVSFTTSIAVILHQFIFKYVVFEGYESRINDESIIHSAMISEINQKFVEPRLSKKVQDAKIDATPEGKVYRTEFFPSLTNCKSNLFNRHDLKGRSITESYNDRIKEFEIVTNTNNETHNVIKVVKK</sequence>
<proteinExistence type="inferred from homology"/>
<feature type="chain" id="PRO_0000409031" description="Nuclear rim protein 1">
    <location>
        <begin position="1"/>
        <end position="401"/>
    </location>
</feature>
<feature type="transmembrane region" description="Helical" evidence="2">
    <location>
        <begin position="146"/>
        <end position="166"/>
    </location>
</feature>
<feature type="transmembrane region" description="Helical" evidence="2">
    <location>
        <begin position="256"/>
        <end position="274"/>
    </location>
</feature>
<keyword id="KW-0472">Membrane</keyword>
<keyword id="KW-0539">Nucleus</keyword>
<keyword id="KW-1185">Reference proteome</keyword>
<keyword id="KW-0812">Transmembrane</keyword>
<keyword id="KW-1133">Transmembrane helix</keyword>
<organism>
    <name type="scientific">Vanderwaltozyma polyspora (strain ATCC 22028 / DSM 70294 / BCRC 21397 / CBS 2163 / NBRC 10782 / NRRL Y-8283 / UCD 57-17)</name>
    <name type="common">Kluyveromyces polysporus</name>
    <dbReference type="NCBI Taxonomy" id="436907"/>
    <lineage>
        <taxon>Eukaryota</taxon>
        <taxon>Fungi</taxon>
        <taxon>Dikarya</taxon>
        <taxon>Ascomycota</taxon>
        <taxon>Saccharomycotina</taxon>
        <taxon>Saccharomycetes</taxon>
        <taxon>Saccharomycetales</taxon>
        <taxon>Saccharomycetaceae</taxon>
        <taxon>Vanderwaltozyma</taxon>
    </lineage>
</organism>
<comment type="function">
    <text evidence="1">Member of a perinuclear network that controls recombination at multiple loci to maintain genome stability. Required for rDNA repeat stability (By similarity).</text>
</comment>
<comment type="subcellular location">
    <subcellularLocation>
        <location evidence="1">Nucleus membrane</location>
        <topology evidence="1">Multi-pass membrane protein</topology>
    </subcellularLocation>
</comment>
<comment type="similarity">
    <text evidence="3">Belongs to the NUR1 family.</text>
</comment>
<dbReference type="EMBL" id="DS480389">
    <property type="protein sequence ID" value="EDO18476.1"/>
    <property type="molecule type" value="Genomic_DNA"/>
</dbReference>
<dbReference type="RefSeq" id="XP_001646334.1">
    <property type="nucleotide sequence ID" value="XM_001646284.1"/>
</dbReference>
<dbReference type="SMR" id="A7TH24"/>
<dbReference type="FunCoup" id="A7TH24">
    <property type="interactions" value="37"/>
</dbReference>
<dbReference type="STRING" id="436907.A7TH24"/>
<dbReference type="GeneID" id="5546763"/>
<dbReference type="KEGG" id="vpo:Kpol_1032p72"/>
<dbReference type="eggNOG" id="ENOG502S7S0">
    <property type="taxonomic scope" value="Eukaryota"/>
</dbReference>
<dbReference type="HOGENOM" id="CLU_033252_1_0_1"/>
<dbReference type="InParanoid" id="A7TH24"/>
<dbReference type="OMA" id="LENTHWS"/>
<dbReference type="OrthoDB" id="3363151at2759"/>
<dbReference type="PhylomeDB" id="A7TH24"/>
<dbReference type="Proteomes" id="UP000000267">
    <property type="component" value="Unassembled WGS sequence"/>
</dbReference>
<dbReference type="GO" id="GO:0031965">
    <property type="term" value="C:nuclear membrane"/>
    <property type="evidence" value="ECO:0007669"/>
    <property type="project" value="UniProtKB-SubCell"/>
</dbReference>
<dbReference type="GO" id="GO:0043007">
    <property type="term" value="P:maintenance of rDNA"/>
    <property type="evidence" value="ECO:0007669"/>
    <property type="project" value="EnsemblFungi"/>
</dbReference>
<dbReference type="GO" id="GO:0007096">
    <property type="term" value="P:regulation of exit from mitosis"/>
    <property type="evidence" value="ECO:0007669"/>
    <property type="project" value="EnsemblFungi"/>
</dbReference>
<dbReference type="InterPro" id="IPR018819">
    <property type="entry name" value="Nur1/Mug154"/>
</dbReference>
<dbReference type="PANTHER" id="PTHR28293">
    <property type="entry name" value="NUCLEAR RIM PROTEIN 1"/>
    <property type="match status" value="1"/>
</dbReference>
<dbReference type="PANTHER" id="PTHR28293:SF1">
    <property type="entry name" value="NUCLEAR RIM PROTEIN 1"/>
    <property type="match status" value="1"/>
</dbReference>
<dbReference type="Pfam" id="PF10332">
    <property type="entry name" value="DUF2418"/>
    <property type="match status" value="1"/>
</dbReference>
<accession>A7TH24</accession>
<evidence type="ECO:0000250" key="1"/>
<evidence type="ECO:0000255" key="2"/>
<evidence type="ECO:0000305" key="3"/>
<gene>
    <name type="primary">NUR1</name>
    <name type="ORF">Kpol_1032p72</name>
</gene>